<organism>
    <name type="scientific">Aspergillus terreus (strain NIH 2624 / FGSC A1156)</name>
    <dbReference type="NCBI Taxonomy" id="341663"/>
    <lineage>
        <taxon>Eukaryota</taxon>
        <taxon>Fungi</taxon>
        <taxon>Dikarya</taxon>
        <taxon>Ascomycota</taxon>
        <taxon>Pezizomycotina</taxon>
        <taxon>Eurotiomycetes</taxon>
        <taxon>Eurotiomycetidae</taxon>
        <taxon>Eurotiales</taxon>
        <taxon>Aspergillaceae</taxon>
        <taxon>Aspergillus</taxon>
        <taxon>Aspergillus subgen. Circumdati</taxon>
    </lineage>
</organism>
<sequence length="593" mass="67315">MERSKSALAHSSSYGQACTQCYKAKCRCVRTPSGDTCERCIRLKKRCEPSESVRRRNAQSTQTAKVSDRRIARLEDKMESLLSAMQSFIGTTASSASSANVIQPQQLNCDGLPSSTSYSNSSLVTPASSTLGFNEGQTFAPDSLTTVSPNSNQNAIFLSQPYVPSTPAPSPNHADERLHFFRTRMLPSFPFLDLTPDMTSWYLRQNRPFLFQAIHTVTTFSTQERLTQVEELKRLIFTSALLKVQSNIDLLLGLLTYLAWSTDPFLGRADLVSRLMMLAISLVISSHLGRQDALRWTPQMEEALRVLTISEACPSDRLFVAQVRLQLLKQRSDEARQQDEARTGTAPTAASAPRLLYLKTLRRELQELRASFPPDLHQIDVLNTHAQYVELYINQLAYSISQDSLPLDLAGRMGTGSQLGFQRLECLWQSVENIKSWLDNFYKIPCSKLVGQPFHFWSQMILTITLLKYLTTLKDPDWDCQAVRNTVHLISTMDCMLQKLDLSSKEPELQCNDHLLKFLSKLLSRCRVWAEARWNIASQMQDGDTRQCRSANPDTNSHNYYIPDLDQMVFMQSMDLGDDQWFENVLGMPTMFY</sequence>
<dbReference type="EMBL" id="CH476604">
    <property type="protein sequence ID" value="EAU31929.1"/>
    <property type="status" value="ALT_SEQ"/>
    <property type="molecule type" value="Genomic_DNA"/>
</dbReference>
<dbReference type="RefSeq" id="XP_001216288.1">
    <property type="nucleotide sequence ID" value="XM_001216288.1"/>
</dbReference>
<dbReference type="STRING" id="341663.Q0CF67"/>
<dbReference type="EnsemblFungi" id="EAU31929">
    <property type="protein sequence ID" value="EAU31929"/>
    <property type="gene ID" value="ATEG_07667"/>
</dbReference>
<dbReference type="GeneID" id="4322612"/>
<dbReference type="eggNOG" id="ENOG502SD7F">
    <property type="taxonomic scope" value="Eukaryota"/>
</dbReference>
<dbReference type="HOGENOM" id="CLU_006524_7_1_1"/>
<dbReference type="OrthoDB" id="1600564at2759"/>
<dbReference type="Proteomes" id="UP000007963">
    <property type="component" value="Unassembled WGS sequence"/>
</dbReference>
<dbReference type="GO" id="GO:0005634">
    <property type="term" value="C:nucleus"/>
    <property type="evidence" value="ECO:0007669"/>
    <property type="project" value="UniProtKB-SubCell"/>
</dbReference>
<dbReference type="GO" id="GO:0000981">
    <property type="term" value="F:DNA-binding transcription factor activity, RNA polymerase II-specific"/>
    <property type="evidence" value="ECO:0007669"/>
    <property type="project" value="InterPro"/>
</dbReference>
<dbReference type="GO" id="GO:0000976">
    <property type="term" value="F:transcription cis-regulatory region binding"/>
    <property type="evidence" value="ECO:0007669"/>
    <property type="project" value="TreeGrafter"/>
</dbReference>
<dbReference type="GO" id="GO:0008270">
    <property type="term" value="F:zinc ion binding"/>
    <property type="evidence" value="ECO:0007669"/>
    <property type="project" value="InterPro"/>
</dbReference>
<dbReference type="GO" id="GO:0009893">
    <property type="term" value="P:positive regulation of metabolic process"/>
    <property type="evidence" value="ECO:0007669"/>
    <property type="project" value="UniProtKB-ARBA"/>
</dbReference>
<dbReference type="Gene3D" id="4.10.240.10">
    <property type="entry name" value="Zn(2)-C6 fungal-type DNA-binding domain"/>
    <property type="match status" value="1"/>
</dbReference>
<dbReference type="InterPro" id="IPR051089">
    <property type="entry name" value="prtT"/>
</dbReference>
<dbReference type="InterPro" id="IPR036864">
    <property type="entry name" value="Zn2-C6_fun-type_DNA-bd_sf"/>
</dbReference>
<dbReference type="PANTHER" id="PTHR31845">
    <property type="entry name" value="FINGER DOMAIN PROTEIN, PUTATIVE-RELATED"/>
    <property type="match status" value="1"/>
</dbReference>
<dbReference type="PANTHER" id="PTHR31845:SF18">
    <property type="entry name" value="ZN(II)2CYS6 TRANSCRIPTION FACTOR (EUROFUNG)"/>
    <property type="match status" value="1"/>
</dbReference>
<dbReference type="SUPFAM" id="SSF57701">
    <property type="entry name" value="Zn2/Cys6 DNA-binding domain"/>
    <property type="match status" value="1"/>
</dbReference>
<evidence type="ECO:0000255" key="1">
    <source>
        <dbReference type="PROSITE-ProRule" id="PRU00227"/>
    </source>
</evidence>
<evidence type="ECO:0000269" key="2">
    <source>
    </source>
</evidence>
<evidence type="ECO:0000303" key="3">
    <source>
    </source>
</evidence>
<evidence type="ECO:0000305" key="4"/>
<reference key="1">
    <citation type="submission" date="2005-09" db="EMBL/GenBank/DDBJ databases">
        <title>Annotation of the Aspergillus terreus NIH2624 genome.</title>
        <authorList>
            <person name="Birren B.W."/>
            <person name="Lander E.S."/>
            <person name="Galagan J.E."/>
            <person name="Nusbaum C."/>
            <person name="Devon K."/>
            <person name="Henn M."/>
            <person name="Ma L.-J."/>
            <person name="Jaffe D.B."/>
            <person name="Butler J."/>
            <person name="Alvarez P."/>
            <person name="Gnerre S."/>
            <person name="Grabherr M."/>
            <person name="Kleber M."/>
            <person name="Mauceli E.W."/>
            <person name="Brockman W."/>
            <person name="Rounsley S."/>
            <person name="Young S.K."/>
            <person name="LaButti K."/>
            <person name="Pushparaj V."/>
            <person name="DeCaprio D."/>
            <person name="Crawford M."/>
            <person name="Koehrsen M."/>
            <person name="Engels R."/>
            <person name="Montgomery P."/>
            <person name="Pearson M."/>
            <person name="Howarth C."/>
            <person name="Larson L."/>
            <person name="Luoma S."/>
            <person name="White J."/>
            <person name="Alvarado L."/>
            <person name="Kodira C.D."/>
            <person name="Zeng Q."/>
            <person name="Oleary S."/>
            <person name="Yandava C."/>
            <person name="Denning D.W."/>
            <person name="Nierman W.C."/>
            <person name="Milne T."/>
            <person name="Madden K."/>
        </authorList>
    </citation>
    <scope>NUCLEOTIDE SEQUENCE [LARGE SCALE GENOMIC DNA]</scope>
    <source>
        <strain>NIH 2624 / FGSC A1156</strain>
    </source>
</reference>
<reference key="2">
    <citation type="journal article" date="2020" name="Angew. Chem. Int. Ed.">
        <title>Collaborative biosynthesis of a class of bioactive azaphilones by two separate gene clusters containing four PKS/NRPSs with transcriptional cosstalk in fungi.</title>
        <authorList>
            <person name="Huang X."/>
            <person name="Zhang W."/>
            <person name="Tang S."/>
            <person name="Wei S."/>
            <person name="Lu X."/>
        </authorList>
    </citation>
    <scope>FUNCTION</scope>
    <scope>DISRUPTION PHENOTYPE</scope>
    <scope>BIOTECHNOLOGY</scope>
</reference>
<accession>Q0CF67</accession>
<feature type="chain" id="PRO_0000450093" description="Transcription factor ATEG_07667">
    <location>
        <begin position="1"/>
        <end position="593"/>
    </location>
</feature>
<feature type="DNA-binding region" description="Zn(2)-C6 fungal-type" evidence="1">
    <location>
        <begin position="18"/>
        <end position="47"/>
    </location>
</feature>
<proteinExistence type="evidence at protein level"/>
<keyword id="KW-0238">DNA-binding</keyword>
<keyword id="KW-0479">Metal-binding</keyword>
<keyword id="KW-0539">Nucleus</keyword>
<keyword id="KW-1185">Reference proteome</keyword>
<keyword id="KW-0804">Transcription</keyword>
<keyword id="KW-0805">Transcription regulation</keyword>
<keyword id="KW-0862">Zinc</keyword>
<comment type="function">
    <text evidence="2">Transcriptional regulator that regulates both the azasperpyranone A biosynthesis clusters A and B (PubMed:31908094). Specifically up-regulates the expression of the cluster A and B specific transcription factors ATEG_03638 and ATEG_07666, which in turn activate the expression of their respective clusters (PubMed:31908094).</text>
</comment>
<comment type="subcellular location">
    <subcellularLocation>
        <location evidence="1">Nucleus</location>
    </subcellularLocation>
</comment>
<comment type="disruption phenotype">
    <text evidence="2">Results in the significant down-regulation of both azasperpyranone A biosynthesis clusters A and B, including the cluster-specific transcription factors ATEG_03638 and ATEG_07666.</text>
</comment>
<comment type="biotechnology">
    <text evidence="2">Azasperpyranones display potential anti-cancer activities (PubMed:31908094). Azasperpyranones A, C, D, and F exhibit potent growth-inhibitory activity against the A549, HepG2, HCT-116, and HL-60 cell lines, with IC(50) values of 2.39-14.42 mm, respectively (PubMed:31908094). Moreover, azasperpyranone D significantly inhibits HCT-116 xenograft tumor growth in BALB/c-nu mice (PubMed:31908094). In addition, azasperpyranones A and C can bind with four kinds of therapeutic targets for cancer, eEF2K, FGFR, survivin, and TNF-a (PubMed:31908094).</text>
</comment>
<comment type="sequence caution" evidence="4">
    <conflict type="erroneous gene model prediction">
        <sequence resource="EMBL-CDS" id="EAU31929"/>
    </conflict>
</comment>
<name>AZPB7_ASPTN</name>
<protein>
    <recommendedName>
        <fullName evidence="3">Transcription factor ATEG_07667</fullName>
    </recommendedName>
    <alternativeName>
        <fullName evidence="3">Azasperpyranone A biosynthesis cluster B protein ATEG_07667</fullName>
    </alternativeName>
</protein>
<gene>
    <name type="ORF">ATEG_07667</name>
</gene>